<comment type="function">
    <text evidence="1">Hemerythrin is a respiratory protein in blood cells of certain marine worms. The oxygen-binding site in each chain contains two iron atoms (By similarity).</text>
</comment>
<comment type="similarity">
    <text evidence="3">Belongs to the hemerythrin family.</text>
</comment>
<sequence length="119" mass="14036">MPFPVPDPFVWDTSFQVFYFELDEKHRGIFQALFALGNDNNPSNLKLLYRVTANHFAEEEGFMQTANYGGYRSHKVLHEDFLAKLRSFKAPVPDKDVYFAKDWLVQHIKTIDFKYKNLL</sequence>
<accession>Q5K486</accession>
<evidence type="ECO:0000250" key="1"/>
<evidence type="ECO:0000250" key="2">
    <source>
        <dbReference type="UniProtKB" id="P02244"/>
    </source>
</evidence>
<evidence type="ECO:0000305" key="3"/>
<reference key="1">
    <citation type="submission" date="2004-03" db="EMBL/GenBank/DDBJ databases">
        <title>Molecular evolution and phylogeny of Sipuculans hemerythrins.</title>
        <authorList>
            <person name="Vanin S."/>
            <person name="Negrisolo E."/>
            <person name="Bailly X."/>
            <person name="Bubacco L."/>
            <person name="Beltramini M."/>
            <person name="Salvato B."/>
        </authorList>
    </citation>
    <scope>NUCLEOTIDE SEQUENCE [MRNA]</scope>
</reference>
<protein>
    <recommendedName>
        <fullName>Hemerythrin subunit A</fullName>
        <shortName>Hr A</shortName>
    </recommendedName>
</protein>
<keyword id="KW-0408">Iron</keyword>
<keyword id="KW-0479">Metal-binding</keyword>
<keyword id="KW-0561">Oxygen transport</keyword>
<keyword id="KW-0813">Transport</keyword>
<organism>
    <name type="scientific">Sipunculus nudus</name>
    <name type="common">Sipunculan worm</name>
    <dbReference type="NCBI Taxonomy" id="6446"/>
    <lineage>
        <taxon>Eukaryota</taxon>
        <taxon>Metazoa</taxon>
        <taxon>Spiralia</taxon>
        <taxon>Lophotrochozoa</taxon>
        <taxon>Annelida</taxon>
        <taxon>Sipuncula</taxon>
        <taxon>Sipunculidea</taxon>
        <taxon>Golfingiida</taxon>
        <taxon>Sipunculidae</taxon>
        <taxon>Sipunculus</taxon>
    </lineage>
</organism>
<name>HEMTA_SIPNU</name>
<dbReference type="EMBL" id="AJ632021">
    <property type="protein sequence ID" value="CAF74912.1"/>
    <property type="molecule type" value="mRNA"/>
</dbReference>
<dbReference type="SMR" id="Q5K486"/>
<dbReference type="GO" id="GO:0005506">
    <property type="term" value="F:iron ion binding"/>
    <property type="evidence" value="ECO:0007669"/>
    <property type="project" value="InterPro"/>
</dbReference>
<dbReference type="GO" id="GO:0005344">
    <property type="term" value="F:oxygen carrier activity"/>
    <property type="evidence" value="ECO:0007669"/>
    <property type="project" value="UniProtKB-KW"/>
</dbReference>
<dbReference type="CDD" id="cd12107">
    <property type="entry name" value="Hemerythrin"/>
    <property type="match status" value="1"/>
</dbReference>
<dbReference type="Gene3D" id="1.20.120.50">
    <property type="entry name" value="Hemerythrin-like"/>
    <property type="match status" value="1"/>
</dbReference>
<dbReference type="InterPro" id="IPR002063">
    <property type="entry name" value="Haemerythrin"/>
</dbReference>
<dbReference type="InterPro" id="IPR016131">
    <property type="entry name" value="Haemerythrin_Fe_BS"/>
</dbReference>
<dbReference type="InterPro" id="IPR050669">
    <property type="entry name" value="Hemerythrin"/>
</dbReference>
<dbReference type="InterPro" id="IPR012312">
    <property type="entry name" value="Hemerythrin-like"/>
</dbReference>
<dbReference type="InterPro" id="IPR035938">
    <property type="entry name" value="Hemerythrin-like_sf"/>
</dbReference>
<dbReference type="InterPro" id="IPR012827">
    <property type="entry name" value="Hemerythrin_metal-bd"/>
</dbReference>
<dbReference type="NCBIfam" id="TIGR02481">
    <property type="entry name" value="hemeryth_dom"/>
    <property type="match status" value="1"/>
</dbReference>
<dbReference type="NCBIfam" id="TIGR00058">
    <property type="entry name" value="Hemerythrin"/>
    <property type="match status" value="1"/>
</dbReference>
<dbReference type="PANTHER" id="PTHR37164">
    <property type="entry name" value="BACTERIOHEMERYTHRIN"/>
    <property type="match status" value="1"/>
</dbReference>
<dbReference type="PANTHER" id="PTHR37164:SF1">
    <property type="entry name" value="BACTERIOHEMERYTHRIN"/>
    <property type="match status" value="1"/>
</dbReference>
<dbReference type="Pfam" id="PF01814">
    <property type="entry name" value="Hemerythrin"/>
    <property type="match status" value="1"/>
</dbReference>
<dbReference type="PIRSF" id="PIRSF002033">
    <property type="entry name" value="Hemerythrin"/>
    <property type="match status" value="1"/>
</dbReference>
<dbReference type="PRINTS" id="PR00186">
    <property type="entry name" value="HEMERYTHRIN"/>
</dbReference>
<dbReference type="SUPFAM" id="SSF47188">
    <property type="entry name" value="Hemerythrin-like"/>
    <property type="match status" value="1"/>
</dbReference>
<dbReference type="PROSITE" id="PS00550">
    <property type="entry name" value="HEMERYTHRINS"/>
    <property type="match status" value="1"/>
</dbReference>
<feature type="chain" id="PRO_0000343356" description="Hemerythrin subunit A">
    <location>
        <begin position="1"/>
        <end position="119"/>
    </location>
</feature>
<feature type="binding site" evidence="2">
    <location>
        <position position="26"/>
    </location>
    <ligand>
        <name>Fe cation</name>
        <dbReference type="ChEBI" id="CHEBI:24875"/>
        <label>1</label>
    </ligand>
</feature>
<feature type="binding site" evidence="2">
    <location>
        <position position="55"/>
    </location>
    <ligand>
        <name>Fe cation</name>
        <dbReference type="ChEBI" id="CHEBI:24875"/>
        <label>1</label>
    </ligand>
</feature>
<feature type="binding site" evidence="2">
    <location>
        <position position="59"/>
    </location>
    <ligand>
        <name>Fe cation</name>
        <dbReference type="ChEBI" id="CHEBI:24875"/>
        <label>1</label>
    </ligand>
</feature>
<feature type="binding site" evidence="2">
    <location>
        <position position="59"/>
    </location>
    <ligand>
        <name>Fe cation</name>
        <dbReference type="ChEBI" id="CHEBI:24875"/>
        <label>2</label>
    </ligand>
</feature>
<feature type="binding site" evidence="2">
    <location>
        <position position="74"/>
    </location>
    <ligand>
        <name>Fe cation</name>
        <dbReference type="ChEBI" id="CHEBI:24875"/>
        <label>2</label>
    </ligand>
</feature>
<feature type="binding site" evidence="2">
    <location>
        <position position="78"/>
    </location>
    <ligand>
        <name>Fe cation</name>
        <dbReference type="ChEBI" id="CHEBI:24875"/>
        <label>2</label>
    </ligand>
</feature>
<feature type="binding site" evidence="2">
    <location>
        <position position="107"/>
    </location>
    <ligand>
        <name>Fe cation</name>
        <dbReference type="ChEBI" id="CHEBI:24875"/>
        <label>2</label>
    </ligand>
</feature>
<feature type="binding site" evidence="2">
    <location>
        <position position="112"/>
    </location>
    <ligand>
        <name>Fe cation</name>
        <dbReference type="ChEBI" id="CHEBI:24875"/>
        <label>1</label>
    </ligand>
</feature>
<feature type="binding site" evidence="2">
    <location>
        <position position="112"/>
    </location>
    <ligand>
        <name>Fe cation</name>
        <dbReference type="ChEBI" id="CHEBI:24875"/>
        <label>2</label>
    </ligand>
</feature>
<proteinExistence type="inferred from homology"/>